<keyword id="KW-0067">ATP-binding</keyword>
<keyword id="KW-0963">Cytoplasm</keyword>
<keyword id="KW-0418">Kinase</keyword>
<keyword id="KW-0545">Nucleotide biosynthesis</keyword>
<keyword id="KW-0547">Nucleotide-binding</keyword>
<keyword id="KW-1185">Reference proteome</keyword>
<keyword id="KW-0808">Transferase</keyword>
<dbReference type="EC" id="2.7.4.3" evidence="1"/>
<dbReference type="EMBL" id="AM167904">
    <property type="protein sequence ID" value="CAJ49713.1"/>
    <property type="molecule type" value="Genomic_DNA"/>
</dbReference>
<dbReference type="RefSeq" id="WP_012417769.1">
    <property type="nucleotide sequence ID" value="NC_010645.1"/>
</dbReference>
<dbReference type="SMR" id="Q2KZE4"/>
<dbReference type="STRING" id="360910.BAV2103"/>
<dbReference type="GeneID" id="92934838"/>
<dbReference type="KEGG" id="bav:BAV2103"/>
<dbReference type="eggNOG" id="COG0563">
    <property type="taxonomic scope" value="Bacteria"/>
</dbReference>
<dbReference type="HOGENOM" id="CLU_032354_1_2_4"/>
<dbReference type="OrthoDB" id="9805030at2"/>
<dbReference type="UniPathway" id="UPA00588">
    <property type="reaction ID" value="UER00649"/>
</dbReference>
<dbReference type="Proteomes" id="UP000001977">
    <property type="component" value="Chromosome"/>
</dbReference>
<dbReference type="GO" id="GO:0005737">
    <property type="term" value="C:cytoplasm"/>
    <property type="evidence" value="ECO:0007669"/>
    <property type="project" value="UniProtKB-SubCell"/>
</dbReference>
<dbReference type="GO" id="GO:0004017">
    <property type="term" value="F:adenylate kinase activity"/>
    <property type="evidence" value="ECO:0007669"/>
    <property type="project" value="UniProtKB-UniRule"/>
</dbReference>
<dbReference type="GO" id="GO:0005524">
    <property type="term" value="F:ATP binding"/>
    <property type="evidence" value="ECO:0007669"/>
    <property type="project" value="UniProtKB-UniRule"/>
</dbReference>
<dbReference type="GO" id="GO:0044209">
    <property type="term" value="P:AMP salvage"/>
    <property type="evidence" value="ECO:0007669"/>
    <property type="project" value="UniProtKB-UniRule"/>
</dbReference>
<dbReference type="CDD" id="cd01428">
    <property type="entry name" value="ADK"/>
    <property type="match status" value="1"/>
</dbReference>
<dbReference type="FunFam" id="3.40.50.300:FF:000106">
    <property type="entry name" value="Adenylate kinase mitochondrial"/>
    <property type="match status" value="1"/>
</dbReference>
<dbReference type="Gene3D" id="3.40.50.300">
    <property type="entry name" value="P-loop containing nucleotide triphosphate hydrolases"/>
    <property type="match status" value="1"/>
</dbReference>
<dbReference type="HAMAP" id="MF_00235">
    <property type="entry name" value="Adenylate_kinase_Adk"/>
    <property type="match status" value="1"/>
</dbReference>
<dbReference type="InterPro" id="IPR006259">
    <property type="entry name" value="Adenyl_kin_sub"/>
</dbReference>
<dbReference type="InterPro" id="IPR000850">
    <property type="entry name" value="Adenylat/UMP-CMP_kin"/>
</dbReference>
<dbReference type="InterPro" id="IPR033690">
    <property type="entry name" value="Adenylat_kinase_CS"/>
</dbReference>
<dbReference type="InterPro" id="IPR007862">
    <property type="entry name" value="Adenylate_kinase_lid-dom"/>
</dbReference>
<dbReference type="InterPro" id="IPR027417">
    <property type="entry name" value="P-loop_NTPase"/>
</dbReference>
<dbReference type="NCBIfam" id="TIGR01351">
    <property type="entry name" value="adk"/>
    <property type="match status" value="1"/>
</dbReference>
<dbReference type="NCBIfam" id="NF001379">
    <property type="entry name" value="PRK00279.1-1"/>
    <property type="match status" value="1"/>
</dbReference>
<dbReference type="NCBIfam" id="NF001380">
    <property type="entry name" value="PRK00279.1-2"/>
    <property type="match status" value="1"/>
</dbReference>
<dbReference type="NCBIfam" id="NF001381">
    <property type="entry name" value="PRK00279.1-3"/>
    <property type="match status" value="1"/>
</dbReference>
<dbReference type="NCBIfam" id="NF011100">
    <property type="entry name" value="PRK14527.1"/>
    <property type="match status" value="1"/>
</dbReference>
<dbReference type="PANTHER" id="PTHR23359">
    <property type="entry name" value="NUCLEOTIDE KINASE"/>
    <property type="match status" value="1"/>
</dbReference>
<dbReference type="Pfam" id="PF00406">
    <property type="entry name" value="ADK"/>
    <property type="match status" value="1"/>
</dbReference>
<dbReference type="Pfam" id="PF05191">
    <property type="entry name" value="ADK_lid"/>
    <property type="match status" value="1"/>
</dbReference>
<dbReference type="PRINTS" id="PR00094">
    <property type="entry name" value="ADENYLTKNASE"/>
</dbReference>
<dbReference type="SUPFAM" id="SSF52540">
    <property type="entry name" value="P-loop containing nucleoside triphosphate hydrolases"/>
    <property type="match status" value="1"/>
</dbReference>
<dbReference type="PROSITE" id="PS00113">
    <property type="entry name" value="ADENYLATE_KINASE"/>
    <property type="match status" value="1"/>
</dbReference>
<reference key="1">
    <citation type="journal article" date="2006" name="J. Bacteriol.">
        <title>Comparison of the genome sequence of the poultry pathogen Bordetella avium with those of B. bronchiseptica, B. pertussis, and B. parapertussis reveals extensive diversity in surface structures associated with host interaction.</title>
        <authorList>
            <person name="Sebaihia M."/>
            <person name="Preston A."/>
            <person name="Maskell D.J."/>
            <person name="Kuzmiak H."/>
            <person name="Connell T.D."/>
            <person name="King N.D."/>
            <person name="Orndorff P.E."/>
            <person name="Miyamoto D.M."/>
            <person name="Thomson N.R."/>
            <person name="Harris D."/>
            <person name="Goble A."/>
            <person name="Lord A."/>
            <person name="Murphy L."/>
            <person name="Quail M.A."/>
            <person name="Rutter S."/>
            <person name="Squares R."/>
            <person name="Squares S."/>
            <person name="Woodward J."/>
            <person name="Parkhill J."/>
            <person name="Temple L.M."/>
        </authorList>
    </citation>
    <scope>NUCLEOTIDE SEQUENCE [LARGE SCALE GENOMIC DNA]</scope>
    <source>
        <strain>197N</strain>
    </source>
</reference>
<name>KAD_BORA1</name>
<organism>
    <name type="scientific">Bordetella avium (strain 197N)</name>
    <dbReference type="NCBI Taxonomy" id="360910"/>
    <lineage>
        <taxon>Bacteria</taxon>
        <taxon>Pseudomonadati</taxon>
        <taxon>Pseudomonadota</taxon>
        <taxon>Betaproteobacteria</taxon>
        <taxon>Burkholderiales</taxon>
        <taxon>Alcaligenaceae</taxon>
        <taxon>Bordetella</taxon>
    </lineage>
</organism>
<sequence>MRLILLGPPGAGKGTQATFITQTYGIPQISTGDMLRAAVKAGTPLGIEAKKVMDAGGLMPDEIIIGLVKDRLAQPDCANGYLFDGYPRTIPQADALKDAGVKLDYVIEIAVPDEDIVKRMSGRWVHLASGRSYNTQSNPPKVAGQDDITGEALIQRDDDREETVRHRLGIYQQQTRPLVDYYSSWAAQDPANAPKYRKISGVGSVEEIKARAAAALQS</sequence>
<evidence type="ECO:0000255" key="1">
    <source>
        <dbReference type="HAMAP-Rule" id="MF_00235"/>
    </source>
</evidence>
<feature type="chain" id="PRO_1000058790" description="Adenylate kinase">
    <location>
        <begin position="1"/>
        <end position="218"/>
    </location>
</feature>
<feature type="region of interest" description="NMP" evidence="1">
    <location>
        <begin position="30"/>
        <end position="59"/>
    </location>
</feature>
<feature type="region of interest" description="LID" evidence="1">
    <location>
        <begin position="122"/>
        <end position="159"/>
    </location>
</feature>
<feature type="binding site" evidence="1">
    <location>
        <begin position="10"/>
        <end position="15"/>
    </location>
    <ligand>
        <name>ATP</name>
        <dbReference type="ChEBI" id="CHEBI:30616"/>
    </ligand>
</feature>
<feature type="binding site" evidence="1">
    <location>
        <position position="31"/>
    </location>
    <ligand>
        <name>AMP</name>
        <dbReference type="ChEBI" id="CHEBI:456215"/>
    </ligand>
</feature>
<feature type="binding site" evidence="1">
    <location>
        <position position="36"/>
    </location>
    <ligand>
        <name>AMP</name>
        <dbReference type="ChEBI" id="CHEBI:456215"/>
    </ligand>
</feature>
<feature type="binding site" evidence="1">
    <location>
        <begin position="57"/>
        <end position="59"/>
    </location>
    <ligand>
        <name>AMP</name>
        <dbReference type="ChEBI" id="CHEBI:456215"/>
    </ligand>
</feature>
<feature type="binding site" evidence="1">
    <location>
        <begin position="85"/>
        <end position="88"/>
    </location>
    <ligand>
        <name>AMP</name>
        <dbReference type="ChEBI" id="CHEBI:456215"/>
    </ligand>
</feature>
<feature type="binding site" evidence="1">
    <location>
        <position position="92"/>
    </location>
    <ligand>
        <name>AMP</name>
        <dbReference type="ChEBI" id="CHEBI:456215"/>
    </ligand>
</feature>
<feature type="binding site" evidence="1">
    <location>
        <position position="123"/>
    </location>
    <ligand>
        <name>ATP</name>
        <dbReference type="ChEBI" id="CHEBI:30616"/>
    </ligand>
</feature>
<feature type="binding site" evidence="1">
    <location>
        <begin position="132"/>
        <end position="133"/>
    </location>
    <ligand>
        <name>ATP</name>
        <dbReference type="ChEBI" id="CHEBI:30616"/>
    </ligand>
</feature>
<feature type="binding site" evidence="1">
    <location>
        <position position="156"/>
    </location>
    <ligand>
        <name>AMP</name>
        <dbReference type="ChEBI" id="CHEBI:456215"/>
    </ligand>
</feature>
<feature type="binding site" evidence="1">
    <location>
        <position position="167"/>
    </location>
    <ligand>
        <name>AMP</name>
        <dbReference type="ChEBI" id="CHEBI:456215"/>
    </ligand>
</feature>
<feature type="binding site" evidence="1">
    <location>
        <position position="203"/>
    </location>
    <ligand>
        <name>ATP</name>
        <dbReference type="ChEBI" id="CHEBI:30616"/>
    </ligand>
</feature>
<proteinExistence type="inferred from homology"/>
<gene>
    <name evidence="1" type="primary">adk</name>
    <name type="ordered locus">BAV2103</name>
</gene>
<accession>Q2KZE4</accession>
<protein>
    <recommendedName>
        <fullName evidence="1">Adenylate kinase</fullName>
        <shortName evidence="1">AK</shortName>
        <ecNumber evidence="1">2.7.4.3</ecNumber>
    </recommendedName>
    <alternativeName>
        <fullName evidence="1">ATP-AMP transphosphorylase</fullName>
    </alternativeName>
    <alternativeName>
        <fullName evidence="1">ATP:AMP phosphotransferase</fullName>
    </alternativeName>
    <alternativeName>
        <fullName evidence="1">Adenylate monophosphate kinase</fullName>
    </alternativeName>
</protein>
<comment type="function">
    <text evidence="1">Catalyzes the reversible transfer of the terminal phosphate group between ATP and AMP. Plays an important role in cellular energy homeostasis and in adenine nucleotide metabolism.</text>
</comment>
<comment type="catalytic activity">
    <reaction evidence="1">
        <text>AMP + ATP = 2 ADP</text>
        <dbReference type="Rhea" id="RHEA:12973"/>
        <dbReference type="ChEBI" id="CHEBI:30616"/>
        <dbReference type="ChEBI" id="CHEBI:456215"/>
        <dbReference type="ChEBI" id="CHEBI:456216"/>
        <dbReference type="EC" id="2.7.4.3"/>
    </reaction>
</comment>
<comment type="pathway">
    <text evidence="1">Purine metabolism; AMP biosynthesis via salvage pathway; AMP from ADP: step 1/1.</text>
</comment>
<comment type="subunit">
    <text evidence="1">Monomer.</text>
</comment>
<comment type="subcellular location">
    <subcellularLocation>
        <location evidence="1">Cytoplasm</location>
    </subcellularLocation>
</comment>
<comment type="domain">
    <text evidence="1">Consists of three domains, a large central CORE domain and two small peripheral domains, NMPbind and LID, which undergo movements during catalysis. The LID domain closes over the site of phosphoryl transfer upon ATP binding. Assembling and dissambling the active center during each catalytic cycle provides an effective means to prevent ATP hydrolysis.</text>
</comment>
<comment type="similarity">
    <text evidence="1">Belongs to the adenylate kinase family.</text>
</comment>